<sequence length="548" mass="59170">MAQLSGQPVVILPEGTQRYVGRDAQRLNILAARIIAETVRTTLGPKGMDKMLVDSLGDIVVTNDGATILDKIDLQHPAAKMMVEVAKTQDKEAGDGTTTAVVIAGELLRKAEELLDQNIHPSIIIKGYALAAEKAQEILDEIAIRVDPDDEETLLKIAATSITGKNAESHKELLAKLAVEAVKQVAEKKDGKYVVDLDNIKFEKKAGEGVEESELVRGVVIDKEVVHPRMPKRVENAKIALINEALEVKKTETDAKINITSPDQLMSFLEQEEKMLKDMVDHIAQTGANVVFVQKGIDDLAQHYLAKYGIMAVRRVKKSDMEKLAKATGAKIVTNVKDLTPEDLGYAEVVEERKLAGENMIFVEGCKNPKAVTILIRGGTEHVIDEVERALEDAVKVVKDVMEDGAVLPAGGAPEIELAIRLDEYAKQVGGKEALAIENFADALKIIPKTLAENAGLDTVEMLVKVISEHKNRGLGIGIDVFEGKPADMLEKGIIEPLRVKKQAIKSASEAAIMILRIDDVIAAKATKPEGGQGGGMPGGMGGMDMGM</sequence>
<keyword id="KW-0002">3D-structure</keyword>
<keyword id="KW-0067">ATP-binding</keyword>
<keyword id="KW-0143">Chaperone</keyword>
<keyword id="KW-0547">Nucleotide-binding</keyword>
<comment type="function">
    <text evidence="1">Molecular chaperone; binds unfolded polypeptides in vitro, and has a weak ATPase activity.</text>
</comment>
<comment type="subunit">
    <text evidence="1">Forms a Heterooligomeric complex of two stacked eight-membered rings.</text>
</comment>
<comment type="similarity">
    <text evidence="3">Belongs to the TCP-1 chaperonin family.</text>
</comment>
<feature type="chain" id="PRO_0000128398" description="Thermosome subunit alpha">
    <location>
        <begin position="1"/>
        <end position="548"/>
    </location>
</feature>
<feature type="region of interest" description="Disordered" evidence="2">
    <location>
        <begin position="527"/>
        <end position="548"/>
    </location>
</feature>
<feature type="compositionally biased region" description="Gly residues" evidence="2">
    <location>
        <begin position="531"/>
        <end position="548"/>
    </location>
</feature>
<feature type="strand" evidence="4">
    <location>
        <begin position="17"/>
        <end position="20"/>
    </location>
</feature>
<feature type="helix" evidence="4">
    <location>
        <begin position="21"/>
        <end position="40"/>
    </location>
</feature>
<feature type="strand" evidence="4">
    <location>
        <begin position="49"/>
        <end position="53"/>
    </location>
</feature>
<feature type="strand" evidence="4">
    <location>
        <begin position="59"/>
        <end position="63"/>
    </location>
</feature>
<feature type="helix" evidence="4">
    <location>
        <begin position="65"/>
        <end position="71"/>
    </location>
</feature>
<feature type="helix" evidence="4">
    <location>
        <begin position="77"/>
        <end position="92"/>
    </location>
</feature>
<feature type="helix" evidence="4">
    <location>
        <begin position="97"/>
        <end position="116"/>
    </location>
</feature>
<feature type="helix" evidence="4">
    <location>
        <begin position="121"/>
        <end position="142"/>
    </location>
</feature>
<feature type="helix" evidence="4">
    <location>
        <begin position="151"/>
        <end position="161"/>
    </location>
</feature>
<feature type="helix" evidence="4">
    <location>
        <begin position="168"/>
        <end position="170"/>
    </location>
</feature>
<feature type="helix" evidence="4">
    <location>
        <begin position="171"/>
        <end position="185"/>
    </location>
</feature>
<feature type="strand" evidence="4">
    <location>
        <begin position="187"/>
        <end position="194"/>
    </location>
</feature>
<feature type="helix" evidence="4">
    <location>
        <begin position="197"/>
        <end position="199"/>
    </location>
</feature>
<feature type="strand" evidence="4">
    <location>
        <begin position="200"/>
        <end position="208"/>
    </location>
</feature>
<feature type="helix" evidence="4">
    <location>
        <begin position="210"/>
        <end position="212"/>
    </location>
</feature>
<feature type="strand" evidence="4">
    <location>
        <begin position="214"/>
        <end position="222"/>
    </location>
</feature>
<feature type="strand" evidence="4">
    <location>
        <begin position="232"/>
        <end position="242"/>
    </location>
</feature>
<feature type="strand" evidence="4">
    <location>
        <begin position="257"/>
        <end position="259"/>
    </location>
</feature>
<feature type="helix" evidence="4">
    <location>
        <begin position="262"/>
        <end position="285"/>
    </location>
</feature>
<feature type="strand" evidence="4">
    <location>
        <begin position="290"/>
        <end position="295"/>
    </location>
</feature>
<feature type="helix" evidence="4">
    <location>
        <begin position="299"/>
        <end position="307"/>
    </location>
</feature>
<feature type="strand" evidence="4">
    <location>
        <begin position="311"/>
        <end position="313"/>
    </location>
</feature>
<feature type="helix" evidence="4">
    <location>
        <begin position="318"/>
        <end position="328"/>
    </location>
</feature>
<feature type="strand" evidence="4">
    <location>
        <begin position="333"/>
        <end position="335"/>
    </location>
</feature>
<feature type="helix" evidence="4">
    <location>
        <begin position="336"/>
        <end position="338"/>
    </location>
</feature>
<feature type="helix" evidence="4">
    <location>
        <begin position="341"/>
        <end position="343"/>
    </location>
</feature>
<feature type="strand" evidence="4">
    <location>
        <begin position="345"/>
        <end position="355"/>
    </location>
</feature>
<feature type="strand" evidence="4">
    <location>
        <begin position="358"/>
        <end position="364"/>
    </location>
</feature>
<feature type="strand" evidence="4">
    <location>
        <begin position="370"/>
        <end position="380"/>
    </location>
</feature>
<feature type="helix" evidence="4">
    <location>
        <begin position="381"/>
        <end position="403"/>
    </location>
</feature>
<feature type="strand" evidence="4">
    <location>
        <begin position="406"/>
        <end position="409"/>
    </location>
</feature>
<feature type="helix" evidence="4">
    <location>
        <begin position="413"/>
        <end position="429"/>
    </location>
</feature>
<feature type="helix" evidence="4">
    <location>
        <begin position="431"/>
        <end position="443"/>
    </location>
</feature>
<feature type="helix" evidence="4">
    <location>
        <begin position="446"/>
        <end position="454"/>
    </location>
</feature>
<feature type="helix" evidence="4">
    <location>
        <begin position="459"/>
        <end position="473"/>
    </location>
</feature>
<feature type="strand" evidence="4">
    <location>
        <begin position="477"/>
        <end position="480"/>
    </location>
</feature>
<feature type="turn" evidence="4">
    <location>
        <begin position="481"/>
        <end position="484"/>
    </location>
</feature>
<feature type="strand" evidence="4">
    <location>
        <begin position="485"/>
        <end position="488"/>
    </location>
</feature>
<feature type="turn" evidence="4">
    <location>
        <begin position="489"/>
        <end position="493"/>
    </location>
</feature>
<feature type="strand" evidence="4">
    <location>
        <begin position="495"/>
        <end position="497"/>
    </location>
</feature>
<feature type="helix" evidence="4">
    <location>
        <begin position="498"/>
        <end position="516"/>
    </location>
</feature>
<feature type="strand" evidence="4">
    <location>
        <begin position="520"/>
        <end position="523"/>
    </location>
</feature>
<evidence type="ECO:0000250" key="1"/>
<evidence type="ECO:0000256" key="2">
    <source>
        <dbReference type="SAM" id="MobiDB-lite"/>
    </source>
</evidence>
<evidence type="ECO:0000305" key="3"/>
<evidence type="ECO:0007829" key="4">
    <source>
        <dbReference type="PDB" id="1Q3Q"/>
    </source>
</evidence>
<reference key="1">
    <citation type="journal article" date="1997" name="J. Mol. Biol.">
        <title>Structural and functional characterization of homo-oligomeric complexes of alpha and beta chaperonin subunits from the hyperthermophilic archaeum Thermococcus strain KS-1.</title>
        <authorList>
            <person name="Yoshida T."/>
            <person name="Yohda M."/>
            <person name="Iida T."/>
            <person name="Maruyama T."/>
            <person name="Taguchi H."/>
            <person name="Yazaki K."/>
            <person name="Ohta T."/>
            <person name="Odaka M."/>
            <person name="Endo I."/>
            <person name="Kagawa Y."/>
        </authorList>
    </citation>
    <scope>NUCLEOTIDE SEQUENCE [GENOMIC DNA]</scope>
</reference>
<reference key="2">
    <citation type="submission" date="2000-04" db="EMBL/GenBank/DDBJ databases">
        <authorList>
            <person name="Yohda M."/>
        </authorList>
    </citation>
    <scope>SEQUENCE REVISION TO 58</scope>
</reference>
<organism>
    <name type="scientific">Thermococcus sp. (strain JCM 11816 / KS-1)</name>
    <dbReference type="NCBI Taxonomy" id="1295125"/>
    <lineage>
        <taxon>Archaea</taxon>
        <taxon>Methanobacteriati</taxon>
        <taxon>Methanobacteriota</taxon>
        <taxon>Thermococci</taxon>
        <taxon>Thermococcales</taxon>
        <taxon>Thermococcaceae</taxon>
        <taxon>Thermococcus</taxon>
    </lineage>
</organism>
<protein>
    <recommendedName>
        <fullName>Thermosome subunit alpha</fullName>
    </recommendedName>
    <alternativeName>
        <fullName>Chaperonin subunit alpha</fullName>
    </alternativeName>
    <alternativeName>
        <fullName>Thermosome subunit 1</fullName>
    </alternativeName>
</protein>
<accession>P61112</accession>
<accession>O24729</accession>
<accession>Q9Y8I3</accession>
<name>THSA_THEK1</name>
<proteinExistence type="evidence at protein level"/>
<gene>
    <name type="primary">thsA</name>
</gene>
<dbReference type="EMBL" id="AB001080">
    <property type="protein sequence ID" value="BAA22207.2"/>
    <property type="molecule type" value="Genomic_DNA"/>
</dbReference>
<dbReference type="PDB" id="1Q2V">
    <property type="method" value="X-ray"/>
    <property type="resolution" value="2.40 A"/>
    <property type="chains" value="A/B/C/D=1-548"/>
</dbReference>
<dbReference type="PDB" id="1Q3Q">
    <property type="method" value="X-ray"/>
    <property type="resolution" value="2.30 A"/>
    <property type="chains" value="A/B/C/D=1-548"/>
</dbReference>
<dbReference type="PDB" id="1Q3R">
    <property type="method" value="X-ray"/>
    <property type="resolution" value="2.90 A"/>
    <property type="chains" value="A/B/C/D=1-548"/>
</dbReference>
<dbReference type="PDB" id="1Q3S">
    <property type="method" value="X-ray"/>
    <property type="resolution" value="3.00 A"/>
    <property type="chains" value="A/B/C/D/E/F/G/H=1-548"/>
</dbReference>
<dbReference type="PDBsum" id="1Q2V"/>
<dbReference type="PDBsum" id="1Q3Q"/>
<dbReference type="PDBsum" id="1Q3R"/>
<dbReference type="PDBsum" id="1Q3S"/>
<dbReference type="SMR" id="P61112"/>
<dbReference type="BRENDA" id="3.6.4.B10">
    <property type="organism ID" value="6304"/>
</dbReference>
<dbReference type="BRENDA" id="5.6.1.7">
    <property type="organism ID" value="12506"/>
</dbReference>
<dbReference type="EvolutionaryTrace" id="P61112"/>
<dbReference type="GO" id="GO:0005524">
    <property type="term" value="F:ATP binding"/>
    <property type="evidence" value="ECO:0007669"/>
    <property type="project" value="UniProtKB-KW"/>
</dbReference>
<dbReference type="GO" id="GO:0016887">
    <property type="term" value="F:ATP hydrolysis activity"/>
    <property type="evidence" value="ECO:0007669"/>
    <property type="project" value="InterPro"/>
</dbReference>
<dbReference type="GO" id="GO:0140662">
    <property type="term" value="F:ATP-dependent protein folding chaperone"/>
    <property type="evidence" value="ECO:0007669"/>
    <property type="project" value="InterPro"/>
</dbReference>
<dbReference type="GO" id="GO:0051082">
    <property type="term" value="F:unfolded protein binding"/>
    <property type="evidence" value="ECO:0007669"/>
    <property type="project" value="InterPro"/>
</dbReference>
<dbReference type="CDD" id="cd03343">
    <property type="entry name" value="cpn60"/>
    <property type="match status" value="1"/>
</dbReference>
<dbReference type="Gene3D" id="3.50.7.10">
    <property type="entry name" value="GroEL"/>
    <property type="match status" value="1"/>
</dbReference>
<dbReference type="Gene3D" id="1.10.560.10">
    <property type="entry name" value="GroEL-like equatorial domain"/>
    <property type="match status" value="1"/>
</dbReference>
<dbReference type="Gene3D" id="3.30.260.10">
    <property type="entry name" value="TCP-1-like chaperonin intermediate domain"/>
    <property type="match status" value="1"/>
</dbReference>
<dbReference type="InterPro" id="IPR017998">
    <property type="entry name" value="Chaperone_TCP-1"/>
</dbReference>
<dbReference type="InterPro" id="IPR002194">
    <property type="entry name" value="Chaperonin_TCP-1_CS"/>
</dbReference>
<dbReference type="InterPro" id="IPR002423">
    <property type="entry name" value="Cpn60/GroEL/TCP-1"/>
</dbReference>
<dbReference type="InterPro" id="IPR027409">
    <property type="entry name" value="GroEL-like_apical_dom_sf"/>
</dbReference>
<dbReference type="InterPro" id="IPR027413">
    <property type="entry name" value="GROEL-like_equatorial_sf"/>
</dbReference>
<dbReference type="InterPro" id="IPR027410">
    <property type="entry name" value="TCP-1-like_intermed_sf"/>
</dbReference>
<dbReference type="InterPro" id="IPR053374">
    <property type="entry name" value="TCP-1_chaperonin"/>
</dbReference>
<dbReference type="InterPro" id="IPR054827">
    <property type="entry name" value="thermosome_alpha"/>
</dbReference>
<dbReference type="InterPro" id="IPR012714">
    <property type="entry name" value="Thermosome_arc"/>
</dbReference>
<dbReference type="NCBIfam" id="NF041082">
    <property type="entry name" value="thermosome_alpha"/>
    <property type="match status" value="1"/>
</dbReference>
<dbReference type="NCBIfam" id="TIGR02339">
    <property type="entry name" value="thermosome_arch"/>
    <property type="match status" value="1"/>
</dbReference>
<dbReference type="NCBIfam" id="NF041083">
    <property type="entry name" value="thermosome_beta"/>
    <property type="match status" value="1"/>
</dbReference>
<dbReference type="PANTHER" id="PTHR11353">
    <property type="entry name" value="CHAPERONIN"/>
    <property type="match status" value="1"/>
</dbReference>
<dbReference type="Pfam" id="PF00118">
    <property type="entry name" value="Cpn60_TCP1"/>
    <property type="match status" value="1"/>
</dbReference>
<dbReference type="PRINTS" id="PR00304">
    <property type="entry name" value="TCOMPLEXTCP1"/>
</dbReference>
<dbReference type="SUPFAM" id="SSF52029">
    <property type="entry name" value="GroEL apical domain-like"/>
    <property type="match status" value="1"/>
</dbReference>
<dbReference type="SUPFAM" id="SSF48592">
    <property type="entry name" value="GroEL equatorial domain-like"/>
    <property type="match status" value="1"/>
</dbReference>
<dbReference type="SUPFAM" id="SSF54849">
    <property type="entry name" value="GroEL-intermediate domain like"/>
    <property type="match status" value="1"/>
</dbReference>
<dbReference type="PROSITE" id="PS00750">
    <property type="entry name" value="TCP1_1"/>
    <property type="match status" value="1"/>
</dbReference>
<dbReference type="PROSITE" id="PS00751">
    <property type="entry name" value="TCP1_2"/>
    <property type="match status" value="1"/>
</dbReference>
<dbReference type="PROSITE" id="PS00995">
    <property type="entry name" value="TCP1_3"/>
    <property type="match status" value="1"/>
</dbReference>